<sequence length="283" mass="31786">MIIDKLYENVEKKGCVCVGLDTDISYLPKGFLNKFTNIEDAIFAFNQRIVDSTFDVSACYKVQIAYYEAMGIKGMILYKKTLEYIRKKGGIVIADIKRGDISATAKMYAKAHFEGDFESDFITLNPYMGMDTLEPYKDYFKNKEKGVFLLLRTSNEGSKDIQYLDLKDNKKVYNKVGEKIENIGKEFLGNCGYSSIGAVVGCTAEENNIRKELKHTFFLIPGYGAQGGKAEVAKSYLSGGNGGIVNSSRGILLAYKKYDEEGKNFEECARNEVINMKKTLQII</sequence>
<reference key="1">
    <citation type="submission" date="2008-05" db="EMBL/GenBank/DDBJ databases">
        <title>Genome sequence of Clostridium botulinum Ba4 strain 657.</title>
        <authorList>
            <person name="Shrivastava S."/>
            <person name="Brown J.L."/>
            <person name="Bruce D."/>
            <person name="Detter C."/>
            <person name="Munk C."/>
            <person name="Smith L.A."/>
            <person name="Smith T.J."/>
            <person name="Sutton G."/>
            <person name="Brettin T.S."/>
        </authorList>
    </citation>
    <scope>NUCLEOTIDE SEQUENCE [LARGE SCALE GENOMIC DNA]</scope>
    <source>
        <strain>657 / Type Ba4</strain>
    </source>
</reference>
<evidence type="ECO:0000255" key="1">
    <source>
        <dbReference type="HAMAP-Rule" id="MF_01215"/>
    </source>
</evidence>
<keyword id="KW-0210">Decarboxylase</keyword>
<keyword id="KW-0456">Lyase</keyword>
<keyword id="KW-0665">Pyrimidine biosynthesis</keyword>
<comment type="catalytic activity">
    <reaction evidence="1">
        <text>orotidine 5'-phosphate + H(+) = UMP + CO2</text>
        <dbReference type="Rhea" id="RHEA:11596"/>
        <dbReference type="ChEBI" id="CHEBI:15378"/>
        <dbReference type="ChEBI" id="CHEBI:16526"/>
        <dbReference type="ChEBI" id="CHEBI:57538"/>
        <dbReference type="ChEBI" id="CHEBI:57865"/>
        <dbReference type="EC" id="4.1.1.23"/>
    </reaction>
</comment>
<comment type="pathway">
    <text evidence="1">Pyrimidine metabolism; UMP biosynthesis via de novo pathway; UMP from orotate: step 2/2.</text>
</comment>
<comment type="similarity">
    <text evidence="1">Belongs to the OMP decarboxylase family. Type 2 subfamily.</text>
</comment>
<feature type="chain" id="PRO_1000213891" description="Orotidine 5'-phosphate decarboxylase">
    <location>
        <begin position="1"/>
        <end position="283"/>
    </location>
</feature>
<feature type="active site" description="Proton donor" evidence="1">
    <location>
        <position position="97"/>
    </location>
</feature>
<proteinExistence type="inferred from homology"/>
<organism>
    <name type="scientific">Clostridium botulinum (strain 657 / Type Ba4)</name>
    <dbReference type="NCBI Taxonomy" id="515621"/>
    <lineage>
        <taxon>Bacteria</taxon>
        <taxon>Bacillati</taxon>
        <taxon>Bacillota</taxon>
        <taxon>Clostridia</taxon>
        <taxon>Eubacteriales</taxon>
        <taxon>Clostridiaceae</taxon>
        <taxon>Clostridium</taxon>
    </lineage>
</organism>
<protein>
    <recommendedName>
        <fullName evidence="1">Orotidine 5'-phosphate decarboxylase</fullName>
        <ecNumber evidence="1">4.1.1.23</ecNumber>
    </recommendedName>
    <alternativeName>
        <fullName evidence="1">OMP decarboxylase</fullName>
        <shortName evidence="1">OMPDCase</shortName>
        <shortName evidence="1">OMPdecase</shortName>
    </alternativeName>
</protein>
<dbReference type="EC" id="4.1.1.23" evidence="1"/>
<dbReference type="EMBL" id="CP001083">
    <property type="protein sequence ID" value="ACQ54815.1"/>
    <property type="molecule type" value="Genomic_DNA"/>
</dbReference>
<dbReference type="RefSeq" id="WP_003361662.1">
    <property type="nucleotide sequence ID" value="NC_012658.1"/>
</dbReference>
<dbReference type="SMR" id="C3KU84"/>
<dbReference type="GeneID" id="5187132"/>
<dbReference type="KEGG" id="cbi:CLJ_B3511"/>
<dbReference type="HOGENOM" id="CLU_060704_1_1_9"/>
<dbReference type="UniPathway" id="UPA00070">
    <property type="reaction ID" value="UER00120"/>
</dbReference>
<dbReference type="Proteomes" id="UP000002333">
    <property type="component" value="Chromosome"/>
</dbReference>
<dbReference type="GO" id="GO:0004590">
    <property type="term" value="F:orotidine-5'-phosphate decarboxylase activity"/>
    <property type="evidence" value="ECO:0007669"/>
    <property type="project" value="UniProtKB-UniRule"/>
</dbReference>
<dbReference type="GO" id="GO:0006207">
    <property type="term" value="P:'de novo' pyrimidine nucleobase biosynthetic process"/>
    <property type="evidence" value="ECO:0007669"/>
    <property type="project" value="InterPro"/>
</dbReference>
<dbReference type="GO" id="GO:0044205">
    <property type="term" value="P:'de novo' UMP biosynthetic process"/>
    <property type="evidence" value="ECO:0007669"/>
    <property type="project" value="UniProtKB-UniRule"/>
</dbReference>
<dbReference type="CDD" id="cd04725">
    <property type="entry name" value="OMP_decarboxylase_like"/>
    <property type="match status" value="1"/>
</dbReference>
<dbReference type="FunFam" id="3.20.20.70:FF:000246">
    <property type="entry name" value="Orotidine 5'-phosphate decarboxylase"/>
    <property type="match status" value="1"/>
</dbReference>
<dbReference type="Gene3D" id="3.20.20.70">
    <property type="entry name" value="Aldolase class I"/>
    <property type="match status" value="1"/>
</dbReference>
<dbReference type="HAMAP" id="MF_01215">
    <property type="entry name" value="OMPdecase_type2"/>
    <property type="match status" value="1"/>
</dbReference>
<dbReference type="InterPro" id="IPR013785">
    <property type="entry name" value="Aldolase_TIM"/>
</dbReference>
<dbReference type="InterPro" id="IPR011995">
    <property type="entry name" value="OMPdecase_type-2"/>
</dbReference>
<dbReference type="InterPro" id="IPR001754">
    <property type="entry name" value="OMPdeCOase_dom"/>
</dbReference>
<dbReference type="InterPro" id="IPR011060">
    <property type="entry name" value="RibuloseP-bd_barrel"/>
</dbReference>
<dbReference type="NCBIfam" id="TIGR02127">
    <property type="entry name" value="pyrF_sub2"/>
    <property type="match status" value="1"/>
</dbReference>
<dbReference type="PANTHER" id="PTHR43375">
    <property type="entry name" value="OROTIDINE 5'-PHOSPHATE DECARBOXYLASE"/>
    <property type="match status" value="1"/>
</dbReference>
<dbReference type="PANTHER" id="PTHR43375:SF1">
    <property type="entry name" value="OROTIDINE 5'-PHOSPHATE DECARBOXYLASE"/>
    <property type="match status" value="1"/>
</dbReference>
<dbReference type="Pfam" id="PF00215">
    <property type="entry name" value="OMPdecase"/>
    <property type="match status" value="1"/>
</dbReference>
<dbReference type="SMART" id="SM00934">
    <property type="entry name" value="OMPdecase"/>
    <property type="match status" value="1"/>
</dbReference>
<dbReference type="SUPFAM" id="SSF51366">
    <property type="entry name" value="Ribulose-phoshate binding barrel"/>
    <property type="match status" value="1"/>
</dbReference>
<accession>C3KU84</accession>
<name>PYRF_CLOB6</name>
<gene>
    <name evidence="1" type="primary">pyrF</name>
    <name type="ordered locus">CLJ_B3511</name>
</gene>